<organism>
    <name type="scientific">Mus musculus</name>
    <name type="common">Mouse</name>
    <dbReference type="NCBI Taxonomy" id="10090"/>
    <lineage>
        <taxon>Eukaryota</taxon>
        <taxon>Metazoa</taxon>
        <taxon>Chordata</taxon>
        <taxon>Craniata</taxon>
        <taxon>Vertebrata</taxon>
        <taxon>Euteleostomi</taxon>
        <taxon>Mammalia</taxon>
        <taxon>Eutheria</taxon>
        <taxon>Euarchontoglires</taxon>
        <taxon>Glires</taxon>
        <taxon>Rodentia</taxon>
        <taxon>Myomorpha</taxon>
        <taxon>Muroidea</taxon>
        <taxon>Muridae</taxon>
        <taxon>Murinae</taxon>
        <taxon>Mus</taxon>
        <taxon>Mus</taxon>
    </lineage>
</organism>
<reference key="1">
    <citation type="journal article" date="2004" name="Genome Res.">
        <title>The status, quality, and expansion of the NIH full-length cDNA project: the Mammalian Gene Collection (MGC).</title>
        <authorList>
            <consortium name="The MGC Project Team"/>
        </authorList>
    </citation>
    <scope>NUCLEOTIDE SEQUENCE [LARGE SCALE MRNA] (ISOFORM 1)</scope>
    <source>
        <strain>Czech II</strain>
        <tissue>Mammary tumor</tissue>
    </source>
</reference>
<reference key="2">
    <citation type="journal article" date="1997" name="J. Biol. Chem.">
        <title>Epsilon-sarcoglycan, a broadly expressed homologue of the gene mutated in limb-girdle muscular dystrophy 2D.</title>
        <authorList>
            <person name="Ettinger A.J."/>
            <person name="Feng G."/>
            <person name="Sanes J.R."/>
        </authorList>
    </citation>
    <scope>NUCLEOTIDE SEQUENCE [MRNA] OF 11-437 (ISOFORM 1)</scope>
    <source>
        <tissue>Lung</tissue>
    </source>
</reference>
<reference key="3">
    <citation type="journal article" date="1998" name="J. Biol. Chem.">
        <authorList>
            <person name="Ettinger A.J."/>
            <person name="Feng G."/>
            <person name="Sanes J.R."/>
        </authorList>
    </citation>
    <scope>ERRATUM OF PUBMED:9405466</scope>
</reference>
<reference key="4">
    <citation type="journal article" date="2005" name="Science">
        <title>The transcriptional landscape of the mammalian genome.</title>
        <authorList>
            <person name="Carninci P."/>
            <person name="Kasukawa T."/>
            <person name="Katayama S."/>
            <person name="Gough J."/>
            <person name="Frith M.C."/>
            <person name="Maeda N."/>
            <person name="Oyama R."/>
            <person name="Ravasi T."/>
            <person name="Lenhard B."/>
            <person name="Wells C."/>
            <person name="Kodzius R."/>
            <person name="Shimokawa K."/>
            <person name="Bajic V.B."/>
            <person name="Brenner S.E."/>
            <person name="Batalov S."/>
            <person name="Forrest A.R."/>
            <person name="Zavolan M."/>
            <person name="Davis M.J."/>
            <person name="Wilming L.G."/>
            <person name="Aidinis V."/>
            <person name="Allen J.E."/>
            <person name="Ambesi-Impiombato A."/>
            <person name="Apweiler R."/>
            <person name="Aturaliya R.N."/>
            <person name="Bailey T.L."/>
            <person name="Bansal M."/>
            <person name="Baxter L."/>
            <person name="Beisel K.W."/>
            <person name="Bersano T."/>
            <person name="Bono H."/>
            <person name="Chalk A.M."/>
            <person name="Chiu K.P."/>
            <person name="Choudhary V."/>
            <person name="Christoffels A."/>
            <person name="Clutterbuck D.R."/>
            <person name="Crowe M.L."/>
            <person name="Dalla E."/>
            <person name="Dalrymple B.P."/>
            <person name="de Bono B."/>
            <person name="Della Gatta G."/>
            <person name="di Bernardo D."/>
            <person name="Down T."/>
            <person name="Engstrom P."/>
            <person name="Fagiolini M."/>
            <person name="Faulkner G."/>
            <person name="Fletcher C.F."/>
            <person name="Fukushima T."/>
            <person name="Furuno M."/>
            <person name="Futaki S."/>
            <person name="Gariboldi M."/>
            <person name="Georgii-Hemming P."/>
            <person name="Gingeras T.R."/>
            <person name="Gojobori T."/>
            <person name="Green R.E."/>
            <person name="Gustincich S."/>
            <person name="Harbers M."/>
            <person name="Hayashi Y."/>
            <person name="Hensch T.K."/>
            <person name="Hirokawa N."/>
            <person name="Hill D."/>
            <person name="Huminiecki L."/>
            <person name="Iacono M."/>
            <person name="Ikeo K."/>
            <person name="Iwama A."/>
            <person name="Ishikawa T."/>
            <person name="Jakt M."/>
            <person name="Kanapin A."/>
            <person name="Katoh M."/>
            <person name="Kawasawa Y."/>
            <person name="Kelso J."/>
            <person name="Kitamura H."/>
            <person name="Kitano H."/>
            <person name="Kollias G."/>
            <person name="Krishnan S.P."/>
            <person name="Kruger A."/>
            <person name="Kummerfeld S.K."/>
            <person name="Kurochkin I.V."/>
            <person name="Lareau L.F."/>
            <person name="Lazarevic D."/>
            <person name="Lipovich L."/>
            <person name="Liu J."/>
            <person name="Liuni S."/>
            <person name="McWilliam S."/>
            <person name="Madan Babu M."/>
            <person name="Madera M."/>
            <person name="Marchionni L."/>
            <person name="Matsuda H."/>
            <person name="Matsuzawa S."/>
            <person name="Miki H."/>
            <person name="Mignone F."/>
            <person name="Miyake S."/>
            <person name="Morris K."/>
            <person name="Mottagui-Tabar S."/>
            <person name="Mulder N."/>
            <person name="Nakano N."/>
            <person name="Nakauchi H."/>
            <person name="Ng P."/>
            <person name="Nilsson R."/>
            <person name="Nishiguchi S."/>
            <person name="Nishikawa S."/>
            <person name="Nori F."/>
            <person name="Ohara O."/>
            <person name="Okazaki Y."/>
            <person name="Orlando V."/>
            <person name="Pang K.C."/>
            <person name="Pavan W.J."/>
            <person name="Pavesi G."/>
            <person name="Pesole G."/>
            <person name="Petrovsky N."/>
            <person name="Piazza S."/>
            <person name="Reed J."/>
            <person name="Reid J.F."/>
            <person name="Ring B.Z."/>
            <person name="Ringwald M."/>
            <person name="Rost B."/>
            <person name="Ruan Y."/>
            <person name="Salzberg S.L."/>
            <person name="Sandelin A."/>
            <person name="Schneider C."/>
            <person name="Schoenbach C."/>
            <person name="Sekiguchi K."/>
            <person name="Semple C.A."/>
            <person name="Seno S."/>
            <person name="Sessa L."/>
            <person name="Sheng Y."/>
            <person name="Shibata Y."/>
            <person name="Shimada H."/>
            <person name="Shimada K."/>
            <person name="Silva D."/>
            <person name="Sinclair B."/>
            <person name="Sperling S."/>
            <person name="Stupka E."/>
            <person name="Sugiura K."/>
            <person name="Sultana R."/>
            <person name="Takenaka Y."/>
            <person name="Taki K."/>
            <person name="Tammoja K."/>
            <person name="Tan S.L."/>
            <person name="Tang S."/>
            <person name="Taylor M.S."/>
            <person name="Tegner J."/>
            <person name="Teichmann S.A."/>
            <person name="Ueda H.R."/>
            <person name="van Nimwegen E."/>
            <person name="Verardo R."/>
            <person name="Wei C.L."/>
            <person name="Yagi K."/>
            <person name="Yamanishi H."/>
            <person name="Zabarovsky E."/>
            <person name="Zhu S."/>
            <person name="Zimmer A."/>
            <person name="Hide W."/>
            <person name="Bult C."/>
            <person name="Grimmond S.M."/>
            <person name="Teasdale R.D."/>
            <person name="Liu E.T."/>
            <person name="Brusic V."/>
            <person name="Quackenbush J."/>
            <person name="Wahlestedt C."/>
            <person name="Mattick J.S."/>
            <person name="Hume D.A."/>
            <person name="Kai C."/>
            <person name="Sasaki D."/>
            <person name="Tomaru Y."/>
            <person name="Fukuda S."/>
            <person name="Kanamori-Katayama M."/>
            <person name="Suzuki M."/>
            <person name="Aoki J."/>
            <person name="Arakawa T."/>
            <person name="Iida J."/>
            <person name="Imamura K."/>
            <person name="Itoh M."/>
            <person name="Kato T."/>
            <person name="Kawaji H."/>
            <person name="Kawagashira N."/>
            <person name="Kawashima T."/>
            <person name="Kojima M."/>
            <person name="Kondo S."/>
            <person name="Konno H."/>
            <person name="Nakano K."/>
            <person name="Ninomiya N."/>
            <person name="Nishio T."/>
            <person name="Okada M."/>
            <person name="Plessy C."/>
            <person name="Shibata K."/>
            <person name="Shiraki T."/>
            <person name="Suzuki S."/>
            <person name="Tagami M."/>
            <person name="Waki K."/>
            <person name="Watahiki A."/>
            <person name="Okamura-Oho Y."/>
            <person name="Suzuki H."/>
            <person name="Kawai J."/>
            <person name="Hayashizaki Y."/>
        </authorList>
    </citation>
    <scope>NUCLEOTIDE SEQUENCE [LARGE SCALE MRNA] OF 22-437 (ISOFORM 1)</scope>
    <source>
        <strain>C57BL/6J</strain>
        <tissue>Embryo</tissue>
    </source>
</reference>
<reference key="5">
    <citation type="journal article" date="1999" name="J. Biol. Chem.">
        <title>Epsilon-sarcoglycan replaces alpha-sarcoglycan in smooth muscle to form a unique dystrophin-glycoprotein complex.</title>
        <authorList>
            <person name="Straub V."/>
            <person name="Ettinger A.J."/>
            <person name="Durbeej M."/>
            <person name="Venzke D.P."/>
            <person name="Cutshall S."/>
            <person name="Sanes J.R."/>
            <person name="Campbell K.P."/>
        </authorList>
    </citation>
    <scope>NUCLEOTIDE SEQUENCE [MRNA] OF 27-437 (ISOFORM 2)</scope>
    <source>
        <tissue>Lung</tissue>
    </source>
</reference>
<reference key="6">
    <citation type="journal article" date="2007" name="Hum. Mol. Genet.">
        <title>SGCE missense mutations that cause myoclonus-dystonia syndrome impair epsilon-sarcoglycan trafficking to the plasma membrane: modulation by ubiquitination and torsinA.</title>
        <authorList>
            <person name="Esapa C.T."/>
            <person name="Waite A."/>
            <person name="Locke M."/>
            <person name="Benson M.A."/>
            <person name="Kraus M."/>
            <person name="McIlhinney R.A."/>
            <person name="Sillitoe R.V."/>
            <person name="Beesley P.W."/>
            <person name="Blake D.J."/>
        </authorList>
    </citation>
    <scope>SUBCELLULAR LOCATION</scope>
    <scope>GLYCOSYLATION</scope>
    <scope>UBIQUITINATION</scope>
    <scope>MUTAGENESIS OF HIS-60 AND LEU-196</scope>
</reference>
<accession>O70258</accession>
<accession>Q921G2</accession>
<protein>
    <recommendedName>
        <fullName>Epsilon-sarcoglycan</fullName>
        <shortName>Epsilon-SG</shortName>
    </recommendedName>
</protein>
<comment type="function">
    <text>Component of the sarcoglycan complex, a subcomplex of the dystrophin-glycoprotein complex which forms a link between the F-actin cytoskeleton and the extracellular matrix.</text>
</comment>
<comment type="subcellular location">
    <subcellularLocation>
        <location evidence="3">Cell membrane</location>
        <location evidence="3">Sarcolemma</location>
        <topology evidence="3">Single-pass membrane protein</topology>
    </subcellularLocation>
    <subcellularLocation>
        <location evidence="3">Golgi apparatus</location>
    </subcellularLocation>
    <subcellularLocation>
        <location evidence="3">Cell projection</location>
        <location evidence="3">Dendrite</location>
    </subcellularLocation>
    <subcellularLocation>
        <location evidence="1">Cytoplasm</location>
        <location evidence="1">Cytoskeleton</location>
    </subcellularLocation>
</comment>
<comment type="alternative products">
    <event type="alternative splicing"/>
    <isoform>
        <id>O70258-1</id>
        <name>1</name>
        <sequence type="displayed"/>
    </isoform>
    <isoform>
        <id>O70258-2</id>
        <name>2</name>
        <sequence type="described" ref="VSP_006019"/>
    </isoform>
</comment>
<comment type="tissue specificity">
    <text>Identified in all tissues tested. Expression highest in lung and placenta, moderate in brain, heart and skeletal muscle, low in kidney and liver. Also detected in embryo.</text>
</comment>
<comment type="PTM">
    <text evidence="3">N-glycosylated.</text>
</comment>
<comment type="PTM">
    <text evidence="3">Ubiquitinated, leading to its degradation by the proteasome.</text>
</comment>
<comment type="similarity">
    <text evidence="5">Belongs to the sarcoglycan alpha/epsilon family.</text>
</comment>
<comment type="sequence caution" evidence="5">
    <conflict type="erroneous initiation">
        <sequence resource="EMBL-CDS" id="AAC14020"/>
    </conflict>
    <text>Truncated N-terminus.</text>
</comment>
<comment type="sequence caution" evidence="5">
    <conflict type="erroneous initiation">
        <sequence resource="EMBL-CDS" id="AAH12665"/>
    </conflict>
    <text>Truncated N-terminus.</text>
</comment>
<comment type="sequence caution" evidence="5">
    <conflict type="erroneous initiation">
        <sequence resource="EMBL-CDS" id="BAC36184"/>
    </conflict>
    <text>Truncated N-terminus.</text>
</comment>
<keyword id="KW-0025">Alternative splicing</keyword>
<keyword id="KW-1003">Cell membrane</keyword>
<keyword id="KW-0966">Cell projection</keyword>
<keyword id="KW-0963">Cytoplasm</keyword>
<keyword id="KW-0206">Cytoskeleton</keyword>
<keyword id="KW-0325">Glycoprotein</keyword>
<keyword id="KW-0333">Golgi apparatus</keyword>
<keyword id="KW-0472">Membrane</keyword>
<keyword id="KW-1185">Reference proteome</keyword>
<keyword id="KW-0812">Transmembrane</keyword>
<keyword id="KW-1133">Transmembrane helix</keyword>
<keyword id="KW-0832">Ubl conjugation</keyword>
<gene>
    <name type="primary">Sgce</name>
</gene>
<evidence type="ECO:0000250" key="1"/>
<evidence type="ECO:0000255" key="2"/>
<evidence type="ECO:0000269" key="3">
    <source>
    </source>
</evidence>
<evidence type="ECO:0000303" key="4">
    <source>
    </source>
</evidence>
<evidence type="ECO:0000305" key="5"/>
<name>SGCE_MOUSE</name>
<dbReference type="EMBL" id="BC012665">
    <property type="protein sequence ID" value="AAH12665.1"/>
    <property type="status" value="ALT_INIT"/>
    <property type="molecule type" value="mRNA"/>
</dbReference>
<dbReference type="EMBL" id="AF031919">
    <property type="protein sequence ID" value="AAC14020.1"/>
    <property type="status" value="ALT_INIT"/>
    <property type="molecule type" value="mRNA"/>
</dbReference>
<dbReference type="EMBL" id="AK076102">
    <property type="protein sequence ID" value="BAC36184.1"/>
    <property type="status" value="ALT_INIT"/>
    <property type="molecule type" value="mRNA"/>
</dbReference>
<dbReference type="EMBL" id="AF103877">
    <property type="protein sequence ID" value="AAF21895.1"/>
    <property type="molecule type" value="mRNA"/>
</dbReference>
<dbReference type="CCDS" id="CCDS51716.1">
    <molecule id="O70258-1"/>
</dbReference>
<dbReference type="CCDS" id="CCDS51718.1">
    <molecule id="O70258-2"/>
</dbReference>
<dbReference type="RefSeq" id="NP_001123660.1">
    <molecule id="O70258-2"/>
    <property type="nucleotide sequence ID" value="NM_001130188.2"/>
</dbReference>
<dbReference type="RefSeq" id="NP_001123661.1">
    <property type="nucleotide sequence ID" value="NM_001130189.1"/>
</dbReference>
<dbReference type="RefSeq" id="NP_001123662.1">
    <property type="nucleotide sequence ID" value="NM_001130190.1"/>
</dbReference>
<dbReference type="RefSeq" id="NP_035490.3">
    <molecule id="O70258-1"/>
    <property type="nucleotide sequence ID" value="NM_011360.3"/>
</dbReference>
<dbReference type="SMR" id="O70258"/>
<dbReference type="BioGRID" id="203196">
    <property type="interactions" value="1"/>
</dbReference>
<dbReference type="CORUM" id="O70258"/>
<dbReference type="FunCoup" id="O70258">
    <property type="interactions" value="605"/>
</dbReference>
<dbReference type="STRING" id="10090.ENSMUSP00000111240"/>
<dbReference type="GlyConnect" id="2298">
    <property type="glycosylation" value="1 N-Linked glycan (1 site)"/>
</dbReference>
<dbReference type="GlyCosmos" id="O70258">
    <property type="glycosylation" value="1 site, 1 glycan"/>
</dbReference>
<dbReference type="GlyGen" id="O70258">
    <property type="glycosylation" value="1 site, 2 N-linked glycans (1 site)"/>
</dbReference>
<dbReference type="iPTMnet" id="O70258"/>
<dbReference type="PhosphoSitePlus" id="O70258"/>
<dbReference type="SwissPalm" id="O70258"/>
<dbReference type="PaxDb" id="10090-ENSMUSP00000111242"/>
<dbReference type="ProteomicsDB" id="261334">
    <molecule id="O70258-1"/>
</dbReference>
<dbReference type="ProteomicsDB" id="261335">
    <molecule id="O70258-2"/>
</dbReference>
<dbReference type="Antibodypedia" id="30109">
    <property type="antibodies" value="143 antibodies from 27 providers"/>
</dbReference>
<dbReference type="DNASU" id="20392"/>
<dbReference type="Ensembl" id="ENSMUST00000115577.9">
    <molecule id="O70258-2"/>
    <property type="protein sequence ID" value="ENSMUSP00000111240.3"/>
    <property type="gene ID" value="ENSMUSG00000004631.16"/>
</dbReference>
<dbReference type="Ensembl" id="ENSMUST00000115579.8">
    <molecule id="O70258-1"/>
    <property type="protein sequence ID" value="ENSMUSP00000111242.2"/>
    <property type="gene ID" value="ENSMUSG00000004631.16"/>
</dbReference>
<dbReference type="GeneID" id="20392"/>
<dbReference type="KEGG" id="mmu:20392"/>
<dbReference type="UCSC" id="uc009avp.2">
    <molecule id="O70258-1"/>
    <property type="organism name" value="mouse"/>
</dbReference>
<dbReference type="UCSC" id="uc009avq.2">
    <molecule id="O70258-2"/>
    <property type="organism name" value="mouse"/>
</dbReference>
<dbReference type="AGR" id="MGI:1329042"/>
<dbReference type="CTD" id="8910"/>
<dbReference type="MGI" id="MGI:1329042">
    <property type="gene designation" value="Sgce"/>
</dbReference>
<dbReference type="VEuPathDB" id="HostDB:ENSMUSG00000004631"/>
<dbReference type="eggNOG" id="KOG4482">
    <property type="taxonomic scope" value="Eukaryota"/>
</dbReference>
<dbReference type="GeneTree" id="ENSGT00390000005672"/>
<dbReference type="InParanoid" id="O70258"/>
<dbReference type="OMA" id="EPRMFNW"/>
<dbReference type="PhylomeDB" id="O70258"/>
<dbReference type="TreeFam" id="TF314655"/>
<dbReference type="Reactome" id="R-MMU-9913351">
    <property type="pathway name" value="Formation of the dystrophin-glycoprotein complex (DGC)"/>
</dbReference>
<dbReference type="BioGRID-ORCS" id="20392">
    <property type="hits" value="2 hits in 79 CRISPR screens"/>
</dbReference>
<dbReference type="ChiTaRS" id="Sgce">
    <property type="organism name" value="mouse"/>
</dbReference>
<dbReference type="PRO" id="PR:O70258"/>
<dbReference type="Proteomes" id="UP000000589">
    <property type="component" value="Chromosome 6"/>
</dbReference>
<dbReference type="RNAct" id="O70258">
    <property type="molecule type" value="protein"/>
</dbReference>
<dbReference type="Bgee" id="ENSMUSG00000004631">
    <property type="expression patterns" value="Expressed in placenta labyrinth and 255 other cell types or tissues"/>
</dbReference>
<dbReference type="ExpressionAtlas" id="O70258">
    <property type="expression patterns" value="baseline and differential"/>
</dbReference>
<dbReference type="GO" id="GO:0005856">
    <property type="term" value="C:cytoskeleton"/>
    <property type="evidence" value="ECO:0007669"/>
    <property type="project" value="UniProtKB-SubCell"/>
</dbReference>
<dbReference type="GO" id="GO:0032590">
    <property type="term" value="C:dendrite membrane"/>
    <property type="evidence" value="ECO:0000314"/>
    <property type="project" value="UniProtKB"/>
</dbReference>
<dbReference type="GO" id="GO:0005794">
    <property type="term" value="C:Golgi apparatus"/>
    <property type="evidence" value="ECO:0000314"/>
    <property type="project" value="UniProtKB"/>
</dbReference>
<dbReference type="GO" id="GO:0005886">
    <property type="term" value="C:plasma membrane"/>
    <property type="evidence" value="ECO:0000314"/>
    <property type="project" value="UniProtKB"/>
</dbReference>
<dbReference type="GO" id="GO:0016012">
    <property type="term" value="C:sarcoglycan complex"/>
    <property type="evidence" value="ECO:0000314"/>
    <property type="project" value="MGI"/>
</dbReference>
<dbReference type="GO" id="GO:0042383">
    <property type="term" value="C:sarcolemma"/>
    <property type="evidence" value="ECO:0007669"/>
    <property type="project" value="UniProtKB-SubCell"/>
</dbReference>
<dbReference type="InterPro" id="IPR006644">
    <property type="entry name" value="Cadg"/>
</dbReference>
<dbReference type="InterPro" id="IPR008908">
    <property type="entry name" value="Sarcoglycan_alpha/epsilon"/>
</dbReference>
<dbReference type="InterPro" id="IPR048347">
    <property type="entry name" value="Sarcoglycan_C"/>
</dbReference>
<dbReference type="InterPro" id="IPR048346">
    <property type="entry name" value="Sarcoglycan_N"/>
</dbReference>
<dbReference type="PANTHER" id="PTHR10132">
    <property type="entry name" value="ALPHA-/EPSILON-SARCOGLYCAN FAMILY MEMBER"/>
    <property type="match status" value="1"/>
</dbReference>
<dbReference type="PANTHER" id="PTHR10132:SF17">
    <property type="entry name" value="EPSILON-SARCOGLYCAN"/>
    <property type="match status" value="1"/>
</dbReference>
<dbReference type="Pfam" id="PF05510">
    <property type="entry name" value="Sarcoglycan_2"/>
    <property type="match status" value="1"/>
</dbReference>
<dbReference type="Pfam" id="PF20989">
    <property type="entry name" value="Sarcoglycan_2_C"/>
    <property type="match status" value="1"/>
</dbReference>
<dbReference type="SMART" id="SM00736">
    <property type="entry name" value="CADG"/>
    <property type="match status" value="1"/>
</dbReference>
<sequence length="437" mass="49736">MLLFWWWELGDPCAWTGKGRGTLKMSPATTGTFLLTVYTLFSKVHSDRNVYPSAGVLFVHVLEREYFKGEFPPYPKPGEVSNDPITFNTNLMGYPDRPGWLRYIQRTPYSDGVLYGSPTAENVGKPTIIEITAYNRRTFETARHNLIINIMSAEEFPLPYQAEFFIKNMNVEEMLASEVLGDFLGAVKNVWQPERLNAINITSALDRGGRVPLPINDMKEGVYVMVGADVAFSSCLREVENPQNQLRCSQEMEPVITCDKKFRTHFHIDWCKISLVDKTKQVSTYQEVVRGEGILPDGGEYKPPSDSLKSRDYYTDFLVTLAVPSAVALVLFLILAYIMCCRREGVEKRDMQTPDIQLVHHSSIQKSTKELRDMSKNREIAWPLSTLPVFHPVTGEVIPPTHTDNYDSTNMPLMQAQQNLPHQTQIPQPQTTGKWYP</sequence>
<proteinExistence type="evidence at protein level"/>
<feature type="chain" id="PRO_0000031678" description="Epsilon-sarcoglycan">
    <location>
        <begin position="1"/>
        <end position="437"/>
    </location>
</feature>
<feature type="topological domain" description="Extracellular" evidence="2">
    <location>
        <begin position="1"/>
        <end position="317"/>
    </location>
</feature>
<feature type="transmembrane region" description="Helical" evidence="2">
    <location>
        <begin position="318"/>
        <end position="338"/>
    </location>
</feature>
<feature type="topological domain" description="Cytoplasmic" evidence="2">
    <location>
        <begin position="339"/>
        <end position="437"/>
    </location>
</feature>
<feature type="glycosylation site" description="N-linked (GlcNAc...) asparagine" evidence="2">
    <location>
        <position position="200"/>
    </location>
</feature>
<feature type="splice variant" id="VSP_006019" description="In isoform 2." evidence="4">
    <original>T</original>
    <variation>TAFLLSCADGINGTVNWKTKQASSFSISRKLAAGKKD</variation>
    <location>
        <position position="36"/>
    </location>
</feature>
<feature type="mutagenesis site" description="Misfolded, leading to the interaction with TOR1A, ubiquitination and a decrease of the half-life. Impairs intracellular transport. No effect on glycosylation." evidence="3">
    <original>H</original>
    <variation>P</variation>
    <variation>R</variation>
    <location>
        <position position="60"/>
    </location>
</feature>
<feature type="mutagenesis site" description="Misfolded, leading to the interaction with TOR1A, ubiquitination and a decrease of the half-life. Impairs intracellular transport. No effect on glycosylation." evidence="3">
    <original>L</original>
    <variation>R</variation>
    <location>
        <position position="196"/>
    </location>
</feature>
<feature type="sequence conflict" description="In Ref. 1; AAH12665." evidence="5" ref="1">
    <original>T</original>
    <variation>M</variation>
    <location>
        <position position="401"/>
    </location>
</feature>